<feature type="chain" id="PRO_1000016535" description="Protein NrdI">
    <location>
        <begin position="1"/>
        <end position="162"/>
    </location>
</feature>
<reference key="1">
    <citation type="journal article" date="2005" name="J. Infect. Dis.">
        <title>Genome sequence of a serotype M28 strain of group A Streptococcus: potential new insights into puerperal sepsis and bacterial disease specificity.</title>
        <authorList>
            <person name="Green N.M."/>
            <person name="Zhang S."/>
            <person name="Porcella S.F."/>
            <person name="Nagiec M.J."/>
            <person name="Barbian K.D."/>
            <person name="Beres S.B."/>
            <person name="Lefebvre R.B."/>
            <person name="Musser J.M."/>
        </authorList>
    </citation>
    <scope>NUCLEOTIDE SEQUENCE [LARGE SCALE GENOMIC DNA]</scope>
    <source>
        <strain>MGAS6180</strain>
    </source>
</reference>
<name>NRDI_STRPM</name>
<dbReference type="EMBL" id="CP000056">
    <property type="protein sequence ID" value="AAX71449.1"/>
    <property type="molecule type" value="Genomic_DNA"/>
</dbReference>
<dbReference type="RefSeq" id="WP_011284545.1">
    <property type="nucleotide sequence ID" value="NC_007296.2"/>
</dbReference>
<dbReference type="SMR" id="Q48V07"/>
<dbReference type="KEGG" id="spb:M28_Spy0335"/>
<dbReference type="HOGENOM" id="CLU_114845_0_0_9"/>
<dbReference type="GO" id="GO:0010181">
    <property type="term" value="F:FMN binding"/>
    <property type="evidence" value="ECO:0007669"/>
    <property type="project" value="InterPro"/>
</dbReference>
<dbReference type="GO" id="GO:0036211">
    <property type="term" value="P:protein modification process"/>
    <property type="evidence" value="ECO:0007669"/>
    <property type="project" value="InterPro"/>
</dbReference>
<dbReference type="Gene3D" id="3.40.50.360">
    <property type="match status" value="1"/>
</dbReference>
<dbReference type="HAMAP" id="MF_00128">
    <property type="entry name" value="NrdI"/>
    <property type="match status" value="1"/>
</dbReference>
<dbReference type="InterPro" id="IPR029039">
    <property type="entry name" value="Flavoprotein-like_sf"/>
</dbReference>
<dbReference type="InterPro" id="IPR020852">
    <property type="entry name" value="RNR_Ib_NrdI_bac"/>
</dbReference>
<dbReference type="InterPro" id="IPR004465">
    <property type="entry name" value="RNR_NrdI"/>
</dbReference>
<dbReference type="NCBIfam" id="TIGR00333">
    <property type="entry name" value="nrdI"/>
    <property type="match status" value="1"/>
</dbReference>
<dbReference type="PANTHER" id="PTHR37297">
    <property type="entry name" value="PROTEIN NRDI"/>
    <property type="match status" value="1"/>
</dbReference>
<dbReference type="PANTHER" id="PTHR37297:SF1">
    <property type="entry name" value="PROTEIN NRDI"/>
    <property type="match status" value="1"/>
</dbReference>
<dbReference type="Pfam" id="PF07972">
    <property type="entry name" value="Flavodoxin_NdrI"/>
    <property type="match status" value="1"/>
</dbReference>
<dbReference type="PIRSF" id="PIRSF005087">
    <property type="entry name" value="NrdI"/>
    <property type="match status" value="1"/>
</dbReference>
<dbReference type="SUPFAM" id="SSF52218">
    <property type="entry name" value="Flavoproteins"/>
    <property type="match status" value="1"/>
</dbReference>
<sequence length="162" mass="18126">MAELIIVYFSSKSNNTHRFVQKLGLPAQRIPVDNRPLEVSTHYLLIVPTYAAGGSDAKGAVPKQVIRFLNNPNNRKHCKGVISSGNTNFGDTFALAGPIISQKLQVPLLHQFELLGTATDVKKVQAIFARLKHHTHDKQKQINNLITERTHPCHKPMRHTSH</sequence>
<proteinExistence type="inferred from homology"/>
<organism>
    <name type="scientific">Streptococcus pyogenes serotype M28 (strain MGAS6180)</name>
    <dbReference type="NCBI Taxonomy" id="319701"/>
    <lineage>
        <taxon>Bacteria</taxon>
        <taxon>Bacillati</taxon>
        <taxon>Bacillota</taxon>
        <taxon>Bacilli</taxon>
        <taxon>Lactobacillales</taxon>
        <taxon>Streptococcaceae</taxon>
        <taxon>Streptococcus</taxon>
    </lineage>
</organism>
<gene>
    <name evidence="1" type="primary">nrdI</name>
    <name type="ordered locus">M28_Spy0335</name>
</gene>
<accession>Q48V07</accession>
<comment type="function">
    <text evidence="1">Probably involved in ribonucleotide reductase function.</text>
</comment>
<comment type="similarity">
    <text evidence="1">Belongs to the NrdI family.</text>
</comment>
<evidence type="ECO:0000255" key="1">
    <source>
        <dbReference type="HAMAP-Rule" id="MF_00128"/>
    </source>
</evidence>
<protein>
    <recommendedName>
        <fullName evidence="1">Protein NrdI</fullName>
    </recommendedName>
</protein>